<evidence type="ECO:0000255" key="1">
    <source>
        <dbReference type="HAMAP-Rule" id="MF_00691"/>
    </source>
</evidence>
<evidence type="ECO:0000305" key="2"/>
<keyword id="KW-0067">ATP-binding</keyword>
<keyword id="KW-0378">Hydrolase</keyword>
<keyword id="KW-0547">Nucleotide-binding</keyword>
<gene>
    <name evidence="1" type="primary">pxpA</name>
    <name type="ordered locus">VVA0778</name>
</gene>
<name>PXPA_VIBVY</name>
<reference key="1">
    <citation type="journal article" date="2003" name="Genome Res.">
        <title>Comparative genome analysis of Vibrio vulnificus, a marine pathogen.</title>
        <authorList>
            <person name="Chen C.-Y."/>
            <person name="Wu K.-M."/>
            <person name="Chang Y.-C."/>
            <person name="Chang C.-H."/>
            <person name="Tsai H.-C."/>
            <person name="Liao T.-L."/>
            <person name="Liu Y.-M."/>
            <person name="Chen H.-J."/>
            <person name="Shen A.B.-T."/>
            <person name="Li J.-C."/>
            <person name="Su T.-L."/>
            <person name="Shao C.-P."/>
            <person name="Lee C.-T."/>
            <person name="Hor L.-I."/>
            <person name="Tsai S.-F."/>
        </authorList>
    </citation>
    <scope>NUCLEOTIDE SEQUENCE [LARGE SCALE GENOMIC DNA]</scope>
    <source>
        <strain>YJ016</strain>
    </source>
</reference>
<protein>
    <recommendedName>
        <fullName evidence="1">5-oxoprolinase subunit A</fullName>
        <shortName evidence="1">5-OPase subunit A</shortName>
        <ecNumber evidence="1">3.5.2.9</ecNumber>
    </recommendedName>
    <alternativeName>
        <fullName evidence="1">5-oxoprolinase (ATP-hydrolyzing) subunit A</fullName>
    </alternativeName>
</protein>
<feature type="chain" id="PRO_0000185061" description="5-oxoprolinase subunit A">
    <location>
        <begin position="1"/>
        <end position="247"/>
    </location>
</feature>
<proteinExistence type="inferred from homology"/>
<accession>Q7ME92</accession>
<comment type="function">
    <text evidence="1">Catalyzes the cleavage of 5-oxoproline to form L-glutamate coupled to the hydrolysis of ATP to ADP and inorganic phosphate.</text>
</comment>
<comment type="catalytic activity">
    <reaction evidence="1">
        <text>5-oxo-L-proline + ATP + 2 H2O = L-glutamate + ADP + phosphate + H(+)</text>
        <dbReference type="Rhea" id="RHEA:10348"/>
        <dbReference type="ChEBI" id="CHEBI:15377"/>
        <dbReference type="ChEBI" id="CHEBI:15378"/>
        <dbReference type="ChEBI" id="CHEBI:29985"/>
        <dbReference type="ChEBI" id="CHEBI:30616"/>
        <dbReference type="ChEBI" id="CHEBI:43474"/>
        <dbReference type="ChEBI" id="CHEBI:58402"/>
        <dbReference type="ChEBI" id="CHEBI:456216"/>
        <dbReference type="EC" id="3.5.2.9"/>
    </reaction>
</comment>
<comment type="subunit">
    <text evidence="1">Forms a complex composed of PxpA, PxpB and PxpC.</text>
</comment>
<comment type="similarity">
    <text evidence="1">Belongs to the LamB/PxpA family.</text>
</comment>
<comment type="sequence caution" evidence="2">
    <conflict type="erroneous initiation">
        <sequence resource="EMBL-CDS" id="BAC96804"/>
    </conflict>
</comment>
<dbReference type="EC" id="3.5.2.9" evidence="1"/>
<dbReference type="EMBL" id="BA000038">
    <property type="protein sequence ID" value="BAC96804.1"/>
    <property type="status" value="ALT_INIT"/>
    <property type="molecule type" value="Genomic_DNA"/>
</dbReference>
<dbReference type="SMR" id="Q7ME92"/>
<dbReference type="STRING" id="672.VV93_v1c37680"/>
<dbReference type="KEGG" id="vvy:VVA0778"/>
<dbReference type="eggNOG" id="COG1540">
    <property type="taxonomic scope" value="Bacteria"/>
</dbReference>
<dbReference type="HOGENOM" id="CLU_069535_0_0_6"/>
<dbReference type="Proteomes" id="UP000002675">
    <property type="component" value="Chromosome II"/>
</dbReference>
<dbReference type="GO" id="GO:0017168">
    <property type="term" value="F:5-oxoprolinase (ATP-hydrolyzing) activity"/>
    <property type="evidence" value="ECO:0007669"/>
    <property type="project" value="UniProtKB-UniRule"/>
</dbReference>
<dbReference type="GO" id="GO:0005524">
    <property type="term" value="F:ATP binding"/>
    <property type="evidence" value="ECO:0007669"/>
    <property type="project" value="UniProtKB-UniRule"/>
</dbReference>
<dbReference type="GO" id="GO:0005975">
    <property type="term" value="P:carbohydrate metabolic process"/>
    <property type="evidence" value="ECO:0007669"/>
    <property type="project" value="InterPro"/>
</dbReference>
<dbReference type="CDD" id="cd10787">
    <property type="entry name" value="LamB_YcsF_like"/>
    <property type="match status" value="1"/>
</dbReference>
<dbReference type="Gene3D" id="3.20.20.370">
    <property type="entry name" value="Glycoside hydrolase/deacetylase"/>
    <property type="match status" value="1"/>
</dbReference>
<dbReference type="HAMAP" id="MF_00691">
    <property type="entry name" value="PxpA"/>
    <property type="match status" value="1"/>
</dbReference>
<dbReference type="InterPro" id="IPR011330">
    <property type="entry name" value="Glyco_hydro/deAcase_b/a-brl"/>
</dbReference>
<dbReference type="InterPro" id="IPR005501">
    <property type="entry name" value="LamB/YcsF/PxpA-like"/>
</dbReference>
<dbReference type="NCBIfam" id="NF003814">
    <property type="entry name" value="PRK05406.1-3"/>
    <property type="match status" value="1"/>
</dbReference>
<dbReference type="NCBIfam" id="NF003816">
    <property type="entry name" value="PRK05406.1-5"/>
    <property type="match status" value="1"/>
</dbReference>
<dbReference type="PANTHER" id="PTHR30292:SF0">
    <property type="entry name" value="5-OXOPROLINASE SUBUNIT A"/>
    <property type="match status" value="1"/>
</dbReference>
<dbReference type="PANTHER" id="PTHR30292">
    <property type="entry name" value="UNCHARACTERIZED PROTEIN YBGL-RELATED"/>
    <property type="match status" value="1"/>
</dbReference>
<dbReference type="Pfam" id="PF03746">
    <property type="entry name" value="LamB_YcsF"/>
    <property type="match status" value="1"/>
</dbReference>
<dbReference type="SUPFAM" id="SSF88713">
    <property type="entry name" value="Glycoside hydrolase/deacetylase"/>
    <property type="match status" value="1"/>
</dbReference>
<sequence>MNKQRVTLNCDMGESFGNWKMGSDELVMPWVDMANIACGFHASDPSVMSKTVALAKHYKVKIGAHPGYQDLVGFGRRSIPHTPAQISEIVLYQVGALKAVCQYHDVPLHYVKPHGALYNDMMESEAIFRAICEAVSIFGIPLMILATSDNQRYLDIADIYDVPLLFEAFADRQYQEDGKLTPRSQANAVYHQPEDIYNQALQIATYGSVNTANGTRLSLEADTICVHGDNPESITLVQRISQAIAKM</sequence>
<organism>
    <name type="scientific">Vibrio vulnificus (strain YJ016)</name>
    <dbReference type="NCBI Taxonomy" id="196600"/>
    <lineage>
        <taxon>Bacteria</taxon>
        <taxon>Pseudomonadati</taxon>
        <taxon>Pseudomonadota</taxon>
        <taxon>Gammaproteobacteria</taxon>
        <taxon>Vibrionales</taxon>
        <taxon>Vibrionaceae</taxon>
        <taxon>Vibrio</taxon>
    </lineage>
</organism>